<protein>
    <recommendedName>
        <fullName>Nicotinate phosphoribosyltransferase</fullName>
        <shortName>NAPRTase</shortName>
        <ecNumber evidence="1">6.3.4.21</ecNumber>
    </recommendedName>
</protein>
<keyword id="KW-0436">Ligase</keyword>
<keyword id="KW-0597">Phosphoprotein</keyword>
<keyword id="KW-0662">Pyridine nucleotide biosynthesis</keyword>
<keyword id="KW-1185">Reference proteome</keyword>
<keyword id="KW-0808">Transferase</keyword>
<evidence type="ECO:0000250" key="1">
    <source>
        <dbReference type="UniProtKB" id="P22253"/>
    </source>
</evidence>
<evidence type="ECO:0000305" key="2"/>
<feature type="chain" id="PRO_0000360847" description="Nicotinate phosphoribosyltransferase">
    <location>
        <begin position="1"/>
        <end position="490"/>
    </location>
</feature>
<feature type="modified residue" description="Phosphohistidine" evidence="1">
    <location>
        <position position="206"/>
    </location>
</feature>
<comment type="function">
    <text evidence="1">Catalyzes the synthesis of beta-nicotinate D-ribonucleotide from nicotinate and 5-phospho-D-ribose 1-phosphate at the expense of ATP.</text>
</comment>
<comment type="catalytic activity">
    <reaction evidence="1">
        <text>nicotinate + 5-phospho-alpha-D-ribose 1-diphosphate + ATP + H2O = nicotinate beta-D-ribonucleotide + ADP + phosphate + diphosphate</text>
        <dbReference type="Rhea" id="RHEA:36163"/>
        <dbReference type="ChEBI" id="CHEBI:15377"/>
        <dbReference type="ChEBI" id="CHEBI:30616"/>
        <dbReference type="ChEBI" id="CHEBI:32544"/>
        <dbReference type="ChEBI" id="CHEBI:33019"/>
        <dbReference type="ChEBI" id="CHEBI:43474"/>
        <dbReference type="ChEBI" id="CHEBI:57502"/>
        <dbReference type="ChEBI" id="CHEBI:58017"/>
        <dbReference type="ChEBI" id="CHEBI:456216"/>
        <dbReference type="EC" id="6.3.4.21"/>
    </reaction>
</comment>
<comment type="pathway">
    <text evidence="1">Cofactor biosynthesis; NAD(+) biosynthesis; nicotinate D-ribonucleotide from nicotinate: step 1/1.</text>
</comment>
<comment type="PTM">
    <text evidence="1">Transiently phosphorylated on a His residue during the reaction cycle. Phosphorylation strongly increases the affinity for substrates and increases the rate of nicotinate D-ribonucleotide production. Dephosphorylation regenerates the low-affinity form of the enzyme, leading to product release.</text>
</comment>
<comment type="similarity">
    <text evidence="2">Belongs to the NAPRTase family.</text>
</comment>
<proteinExistence type="inferred from homology"/>
<name>PNCB_BACSU</name>
<accession>O32090</accession>
<gene>
    <name type="primary">pncB</name>
    <name type="synonym">yueK</name>
    <name type="ordered locus">BSU31750</name>
</gene>
<organism>
    <name type="scientific">Bacillus subtilis (strain 168)</name>
    <dbReference type="NCBI Taxonomy" id="224308"/>
    <lineage>
        <taxon>Bacteria</taxon>
        <taxon>Bacillati</taxon>
        <taxon>Bacillota</taxon>
        <taxon>Bacilli</taxon>
        <taxon>Bacillales</taxon>
        <taxon>Bacillaceae</taxon>
        <taxon>Bacillus</taxon>
    </lineage>
</organism>
<dbReference type="EC" id="6.3.4.21" evidence="1"/>
<dbReference type="EMBL" id="AL009126">
    <property type="protein sequence ID" value="CAB15163.1"/>
    <property type="molecule type" value="Genomic_DNA"/>
</dbReference>
<dbReference type="PIR" id="D70008">
    <property type="entry name" value="D70008"/>
</dbReference>
<dbReference type="RefSeq" id="NP_391053.1">
    <property type="nucleotide sequence ID" value="NC_000964.3"/>
</dbReference>
<dbReference type="RefSeq" id="WP_003228788.1">
    <property type="nucleotide sequence ID" value="NZ_OZ025638.1"/>
</dbReference>
<dbReference type="SMR" id="O32090"/>
<dbReference type="FunCoup" id="O32090">
    <property type="interactions" value="328"/>
</dbReference>
<dbReference type="IntAct" id="O32090">
    <property type="interactions" value="1"/>
</dbReference>
<dbReference type="MINT" id="O32090"/>
<dbReference type="STRING" id="224308.BSU31750"/>
<dbReference type="jPOST" id="O32090"/>
<dbReference type="PaxDb" id="224308-BSU31750"/>
<dbReference type="EnsemblBacteria" id="CAB15163">
    <property type="protein sequence ID" value="CAB15163"/>
    <property type="gene ID" value="BSU_31750"/>
</dbReference>
<dbReference type="GeneID" id="937186"/>
<dbReference type="KEGG" id="bsu:BSU31750"/>
<dbReference type="PATRIC" id="fig|224308.179.peg.3441"/>
<dbReference type="eggNOG" id="COG1488">
    <property type="taxonomic scope" value="Bacteria"/>
</dbReference>
<dbReference type="InParanoid" id="O32090"/>
<dbReference type="OrthoDB" id="9770610at2"/>
<dbReference type="PhylomeDB" id="O32090"/>
<dbReference type="BioCyc" id="BSUB:BSU31750-MONOMER"/>
<dbReference type="UniPathway" id="UPA00253">
    <property type="reaction ID" value="UER00457"/>
</dbReference>
<dbReference type="Proteomes" id="UP000001570">
    <property type="component" value="Chromosome"/>
</dbReference>
<dbReference type="GO" id="GO:0005829">
    <property type="term" value="C:cytosol"/>
    <property type="evidence" value="ECO:0000318"/>
    <property type="project" value="GO_Central"/>
</dbReference>
<dbReference type="GO" id="GO:0004516">
    <property type="term" value="F:nicotinate phosphoribosyltransferase activity"/>
    <property type="evidence" value="ECO:0000318"/>
    <property type="project" value="GO_Central"/>
</dbReference>
<dbReference type="GO" id="GO:0016740">
    <property type="term" value="F:transferase activity"/>
    <property type="evidence" value="ECO:0007669"/>
    <property type="project" value="UniProtKB-KW"/>
</dbReference>
<dbReference type="GO" id="GO:0034355">
    <property type="term" value="P:NAD biosynthetic process via the salvage pathway"/>
    <property type="evidence" value="ECO:0000318"/>
    <property type="project" value="GO_Central"/>
</dbReference>
<dbReference type="CDD" id="cd01570">
    <property type="entry name" value="NAPRTase_A"/>
    <property type="match status" value="1"/>
</dbReference>
<dbReference type="FunFam" id="3.20.20.70:FF:000076">
    <property type="entry name" value="Nicotinate phosphoribosyltransferase"/>
    <property type="match status" value="1"/>
</dbReference>
<dbReference type="Gene3D" id="3.20.20.70">
    <property type="entry name" value="Aldolase class I"/>
    <property type="match status" value="1"/>
</dbReference>
<dbReference type="Gene3D" id="3.20.140.10">
    <property type="entry name" value="nicotinate phosphoribosyltransferase"/>
    <property type="match status" value="1"/>
</dbReference>
<dbReference type="InterPro" id="IPR013785">
    <property type="entry name" value="Aldolase_TIM"/>
</dbReference>
<dbReference type="InterPro" id="IPR041525">
    <property type="entry name" value="N/Namide_PRibTrfase"/>
</dbReference>
<dbReference type="InterPro" id="IPR041619">
    <property type="entry name" value="NAPRTase_C"/>
</dbReference>
<dbReference type="InterPro" id="IPR040727">
    <property type="entry name" value="NAPRTase_N"/>
</dbReference>
<dbReference type="InterPro" id="IPR007229">
    <property type="entry name" value="Nic_PRibTrfase-Fam"/>
</dbReference>
<dbReference type="InterPro" id="IPR006405">
    <property type="entry name" value="Nic_PRibTrfase_pncB"/>
</dbReference>
<dbReference type="InterPro" id="IPR036068">
    <property type="entry name" value="Nicotinate_pribotase-like_C"/>
</dbReference>
<dbReference type="NCBIfam" id="TIGR01513">
    <property type="entry name" value="NAPRTase_put"/>
    <property type="match status" value="1"/>
</dbReference>
<dbReference type="NCBIfam" id="NF006694">
    <property type="entry name" value="PRK09243.1-1"/>
    <property type="match status" value="1"/>
</dbReference>
<dbReference type="NCBIfam" id="NF006695">
    <property type="entry name" value="PRK09243.1-2"/>
    <property type="match status" value="1"/>
</dbReference>
<dbReference type="NCBIfam" id="NF006697">
    <property type="entry name" value="PRK09243.1-4"/>
    <property type="match status" value="1"/>
</dbReference>
<dbReference type="NCBIfam" id="NF009131">
    <property type="entry name" value="PRK12484.1"/>
    <property type="match status" value="1"/>
</dbReference>
<dbReference type="PANTHER" id="PTHR11098">
    <property type="entry name" value="NICOTINATE PHOSPHORIBOSYLTRANSFERASE"/>
    <property type="match status" value="1"/>
</dbReference>
<dbReference type="PANTHER" id="PTHR11098:SF1">
    <property type="entry name" value="NICOTINATE PHOSPHORIBOSYLTRANSFERASE"/>
    <property type="match status" value="1"/>
</dbReference>
<dbReference type="Pfam" id="PF04095">
    <property type="entry name" value="NAPRTase"/>
    <property type="match status" value="1"/>
</dbReference>
<dbReference type="Pfam" id="PF17956">
    <property type="entry name" value="NAPRTase_C"/>
    <property type="match status" value="1"/>
</dbReference>
<dbReference type="Pfam" id="PF17767">
    <property type="entry name" value="NAPRTase_N"/>
    <property type="match status" value="1"/>
</dbReference>
<dbReference type="PIRSF" id="PIRSF000484">
    <property type="entry name" value="NAPRT"/>
    <property type="match status" value="1"/>
</dbReference>
<dbReference type="SUPFAM" id="SSF51690">
    <property type="entry name" value="Nicotinate/Quinolinate PRTase C-terminal domain-like"/>
    <property type="match status" value="1"/>
</dbReference>
<dbReference type="SUPFAM" id="SSF54675">
    <property type="entry name" value="Nicotinate/Quinolinate PRTase N-terminal domain-like"/>
    <property type="match status" value="1"/>
</dbReference>
<sequence length="490" mass="56180">MLEYGFKDDSLSLHTDLYQINMAETYWRDGIHEKKAIFELFFRRLPFENGYAVFAGLEKAIEYLENFKFTDSDLSYLQDELGYHEDFIEYLRGLSFTGSLYSMKEGELVFNNEPIMRVEAPLVEAQLIETALLNIVNYQTLIATKAARIKGVIGDEVALEFGTRRAHEMDAAMWGARAALIGGFSATSNVRAGKRFNIPVSGTHAHALVQAYRDEYTAFKKYAETHKDCVFLVDTYDTLRSGMPNAIRVAKEFGDRINFIGIRLDSGDLAYLSKKARKMLDEAGFTDAKVIASSDLDEHTIMNLKAQGARIDVWGVGTKLITAYDQPALGAVYKLVAIEEDGKMVDTIKISSNPEKVTTPGRKKVYRIINQSNHHSEGDYIALYDEQVNDQKRLRMFHPVHTFISKFVTNFYAKDLHELIFEKGILCYQNPEISDIQQYVQDNLSLLWEEYKRISKPEEYPVDLSEDCWSNKMQRIHEVKSRIEEELEEE</sequence>
<reference key="1">
    <citation type="journal article" date="1997" name="Nature">
        <title>The complete genome sequence of the Gram-positive bacterium Bacillus subtilis.</title>
        <authorList>
            <person name="Kunst F."/>
            <person name="Ogasawara N."/>
            <person name="Moszer I."/>
            <person name="Albertini A.M."/>
            <person name="Alloni G."/>
            <person name="Azevedo V."/>
            <person name="Bertero M.G."/>
            <person name="Bessieres P."/>
            <person name="Bolotin A."/>
            <person name="Borchert S."/>
            <person name="Borriss R."/>
            <person name="Boursier L."/>
            <person name="Brans A."/>
            <person name="Braun M."/>
            <person name="Brignell S.C."/>
            <person name="Bron S."/>
            <person name="Brouillet S."/>
            <person name="Bruschi C.V."/>
            <person name="Caldwell B."/>
            <person name="Capuano V."/>
            <person name="Carter N.M."/>
            <person name="Choi S.-K."/>
            <person name="Codani J.-J."/>
            <person name="Connerton I.F."/>
            <person name="Cummings N.J."/>
            <person name="Daniel R.A."/>
            <person name="Denizot F."/>
            <person name="Devine K.M."/>
            <person name="Duesterhoeft A."/>
            <person name="Ehrlich S.D."/>
            <person name="Emmerson P.T."/>
            <person name="Entian K.-D."/>
            <person name="Errington J."/>
            <person name="Fabret C."/>
            <person name="Ferrari E."/>
            <person name="Foulger D."/>
            <person name="Fritz C."/>
            <person name="Fujita M."/>
            <person name="Fujita Y."/>
            <person name="Fuma S."/>
            <person name="Galizzi A."/>
            <person name="Galleron N."/>
            <person name="Ghim S.-Y."/>
            <person name="Glaser P."/>
            <person name="Goffeau A."/>
            <person name="Golightly E.J."/>
            <person name="Grandi G."/>
            <person name="Guiseppi G."/>
            <person name="Guy B.J."/>
            <person name="Haga K."/>
            <person name="Haiech J."/>
            <person name="Harwood C.R."/>
            <person name="Henaut A."/>
            <person name="Hilbert H."/>
            <person name="Holsappel S."/>
            <person name="Hosono S."/>
            <person name="Hullo M.-F."/>
            <person name="Itaya M."/>
            <person name="Jones L.-M."/>
            <person name="Joris B."/>
            <person name="Karamata D."/>
            <person name="Kasahara Y."/>
            <person name="Klaerr-Blanchard M."/>
            <person name="Klein C."/>
            <person name="Kobayashi Y."/>
            <person name="Koetter P."/>
            <person name="Koningstein G."/>
            <person name="Krogh S."/>
            <person name="Kumano M."/>
            <person name="Kurita K."/>
            <person name="Lapidus A."/>
            <person name="Lardinois S."/>
            <person name="Lauber J."/>
            <person name="Lazarevic V."/>
            <person name="Lee S.-M."/>
            <person name="Levine A."/>
            <person name="Liu H."/>
            <person name="Masuda S."/>
            <person name="Mauel C."/>
            <person name="Medigue C."/>
            <person name="Medina N."/>
            <person name="Mellado R.P."/>
            <person name="Mizuno M."/>
            <person name="Moestl D."/>
            <person name="Nakai S."/>
            <person name="Noback M."/>
            <person name="Noone D."/>
            <person name="O'Reilly M."/>
            <person name="Ogawa K."/>
            <person name="Ogiwara A."/>
            <person name="Oudega B."/>
            <person name="Park S.-H."/>
            <person name="Parro V."/>
            <person name="Pohl T.M."/>
            <person name="Portetelle D."/>
            <person name="Porwollik S."/>
            <person name="Prescott A.M."/>
            <person name="Presecan E."/>
            <person name="Pujic P."/>
            <person name="Purnelle B."/>
            <person name="Rapoport G."/>
            <person name="Rey M."/>
            <person name="Reynolds S."/>
            <person name="Rieger M."/>
            <person name="Rivolta C."/>
            <person name="Rocha E."/>
            <person name="Roche B."/>
            <person name="Rose M."/>
            <person name="Sadaie Y."/>
            <person name="Sato T."/>
            <person name="Scanlan E."/>
            <person name="Schleich S."/>
            <person name="Schroeter R."/>
            <person name="Scoffone F."/>
            <person name="Sekiguchi J."/>
            <person name="Sekowska A."/>
            <person name="Seror S.J."/>
            <person name="Serror P."/>
            <person name="Shin B.-S."/>
            <person name="Soldo B."/>
            <person name="Sorokin A."/>
            <person name="Tacconi E."/>
            <person name="Takagi T."/>
            <person name="Takahashi H."/>
            <person name="Takemaru K."/>
            <person name="Takeuchi M."/>
            <person name="Tamakoshi A."/>
            <person name="Tanaka T."/>
            <person name="Terpstra P."/>
            <person name="Tognoni A."/>
            <person name="Tosato V."/>
            <person name="Uchiyama S."/>
            <person name="Vandenbol M."/>
            <person name="Vannier F."/>
            <person name="Vassarotti A."/>
            <person name="Viari A."/>
            <person name="Wambutt R."/>
            <person name="Wedler E."/>
            <person name="Wedler H."/>
            <person name="Weitzenegger T."/>
            <person name="Winters P."/>
            <person name="Wipat A."/>
            <person name="Yamamoto H."/>
            <person name="Yamane K."/>
            <person name="Yasumoto K."/>
            <person name="Yata K."/>
            <person name="Yoshida K."/>
            <person name="Yoshikawa H.-F."/>
            <person name="Zumstein E."/>
            <person name="Yoshikawa H."/>
            <person name="Danchin A."/>
        </authorList>
    </citation>
    <scope>NUCLEOTIDE SEQUENCE [LARGE SCALE GENOMIC DNA]</scope>
    <source>
        <strain>168</strain>
    </source>
</reference>